<reference key="1">
    <citation type="journal article" date="2005" name="J. Bacteriol.">
        <title>Insights into genome plasticity and pathogenicity of the plant pathogenic Bacterium Xanthomonas campestris pv. vesicatoria revealed by the complete genome sequence.</title>
        <authorList>
            <person name="Thieme F."/>
            <person name="Koebnik R."/>
            <person name="Bekel T."/>
            <person name="Berger C."/>
            <person name="Boch J."/>
            <person name="Buettner D."/>
            <person name="Caldana C."/>
            <person name="Gaigalat L."/>
            <person name="Goesmann A."/>
            <person name="Kay S."/>
            <person name="Kirchner O."/>
            <person name="Lanz C."/>
            <person name="Linke B."/>
            <person name="McHardy A.C."/>
            <person name="Meyer F."/>
            <person name="Mittenhuber G."/>
            <person name="Nies D.H."/>
            <person name="Niesbach-Kloesgen U."/>
            <person name="Patschkowski T."/>
            <person name="Rueckert C."/>
            <person name="Rupp O."/>
            <person name="Schneiker S."/>
            <person name="Schuster S.C."/>
            <person name="Vorhoelter F.J."/>
            <person name="Weber E."/>
            <person name="Puehler A."/>
            <person name="Bonas U."/>
            <person name="Bartels D."/>
            <person name="Kaiser O."/>
        </authorList>
    </citation>
    <scope>NUCLEOTIDE SEQUENCE [LARGE SCALE GENOMIC DNA]</scope>
    <source>
        <strain>85-10</strain>
    </source>
</reference>
<keyword id="KW-0997">Cell inner membrane</keyword>
<keyword id="KW-1003">Cell membrane</keyword>
<keyword id="KW-0143">Chaperone</keyword>
<keyword id="KW-1015">Disulfide bond</keyword>
<keyword id="KW-0249">Electron transport</keyword>
<keyword id="KW-0472">Membrane</keyword>
<keyword id="KW-0560">Oxidoreductase</keyword>
<keyword id="KW-0676">Redox-active center</keyword>
<keyword id="KW-0812">Transmembrane</keyword>
<keyword id="KW-1133">Transmembrane helix</keyword>
<keyword id="KW-0813">Transport</keyword>
<gene>
    <name evidence="1" type="primary">dsbB</name>
    <name type="ordered locus">XCV1026</name>
</gene>
<comment type="function">
    <text evidence="1">Required for disulfide bond formation in some periplasmic proteins. Acts by oxidizing the DsbA protein.</text>
</comment>
<comment type="subcellular location">
    <subcellularLocation>
        <location evidence="1">Cell inner membrane</location>
        <topology evidence="1">Multi-pass membrane protein</topology>
    </subcellularLocation>
</comment>
<comment type="similarity">
    <text evidence="1">Belongs to the DsbB family.</text>
</comment>
<name>DSBB_XANE5</name>
<evidence type="ECO:0000255" key="1">
    <source>
        <dbReference type="HAMAP-Rule" id="MF_00286"/>
    </source>
</evidence>
<dbReference type="EMBL" id="AM039952">
    <property type="protein sequence ID" value="CAJ22657.1"/>
    <property type="molecule type" value="Genomic_DNA"/>
</dbReference>
<dbReference type="RefSeq" id="WP_011346545.1">
    <property type="nucleotide sequence ID" value="NZ_CP017190.1"/>
</dbReference>
<dbReference type="SMR" id="Q3BWV6"/>
<dbReference type="STRING" id="456327.BJD11_17610"/>
<dbReference type="KEGG" id="xcv:XCV1026"/>
<dbReference type="eggNOG" id="COG1495">
    <property type="taxonomic scope" value="Bacteria"/>
</dbReference>
<dbReference type="HOGENOM" id="CLU_098660_1_1_6"/>
<dbReference type="Proteomes" id="UP000007069">
    <property type="component" value="Chromosome"/>
</dbReference>
<dbReference type="GO" id="GO:0005886">
    <property type="term" value="C:plasma membrane"/>
    <property type="evidence" value="ECO:0007669"/>
    <property type="project" value="UniProtKB-SubCell"/>
</dbReference>
<dbReference type="GO" id="GO:0009055">
    <property type="term" value="F:electron transfer activity"/>
    <property type="evidence" value="ECO:0007669"/>
    <property type="project" value="UniProtKB-UniRule"/>
</dbReference>
<dbReference type="GO" id="GO:0015035">
    <property type="term" value="F:protein-disulfide reductase activity"/>
    <property type="evidence" value="ECO:0007669"/>
    <property type="project" value="UniProtKB-UniRule"/>
</dbReference>
<dbReference type="GO" id="GO:0006457">
    <property type="term" value="P:protein folding"/>
    <property type="evidence" value="ECO:0007669"/>
    <property type="project" value="InterPro"/>
</dbReference>
<dbReference type="FunFam" id="1.20.1550.10:FF:000004">
    <property type="entry name" value="Disulfide bond formation protein B"/>
    <property type="match status" value="1"/>
</dbReference>
<dbReference type="Gene3D" id="1.20.1550.10">
    <property type="entry name" value="DsbB-like"/>
    <property type="match status" value="1"/>
</dbReference>
<dbReference type="HAMAP" id="MF_00286">
    <property type="entry name" value="DsbB"/>
    <property type="match status" value="1"/>
</dbReference>
<dbReference type="InterPro" id="IPR003752">
    <property type="entry name" value="DiS_bond_form_DsbB/BdbC"/>
</dbReference>
<dbReference type="InterPro" id="IPR022920">
    <property type="entry name" value="Disulphide_bond_form_DsbB"/>
</dbReference>
<dbReference type="InterPro" id="IPR050183">
    <property type="entry name" value="DsbB"/>
</dbReference>
<dbReference type="InterPro" id="IPR023380">
    <property type="entry name" value="DsbB-like_sf"/>
</dbReference>
<dbReference type="NCBIfam" id="NF003354">
    <property type="entry name" value="PRK04388.1"/>
    <property type="match status" value="1"/>
</dbReference>
<dbReference type="PANTHER" id="PTHR36570">
    <property type="entry name" value="DISULFIDE BOND FORMATION PROTEIN B"/>
    <property type="match status" value="1"/>
</dbReference>
<dbReference type="PANTHER" id="PTHR36570:SF3">
    <property type="entry name" value="DISULFIDE BOND FORMATION PROTEIN B"/>
    <property type="match status" value="1"/>
</dbReference>
<dbReference type="Pfam" id="PF02600">
    <property type="entry name" value="DsbB"/>
    <property type="match status" value="1"/>
</dbReference>
<dbReference type="SUPFAM" id="SSF158442">
    <property type="entry name" value="DsbB-like"/>
    <property type="match status" value="1"/>
</dbReference>
<sequence length="172" mass="18995">MNPFRWSFRAQFLLGFLACAGLLAYAIYVQLHLGLEPCPLCIFQRIAFAALAMFFLLGALHGPRAAAGRKVYGVLSFIAAGVGMGIAARHVWVQIRPKDMMSSCGPPLSFLSETMGPFEVFRTVLTGTGDCGNIDWRFLGLSMPMWSMVWFVGLALWALYAGFKARRSSVHH</sequence>
<proteinExistence type="inferred from homology"/>
<organism>
    <name type="scientific">Xanthomonas euvesicatoria pv. vesicatoria (strain 85-10)</name>
    <name type="common">Xanthomonas campestris pv. vesicatoria</name>
    <dbReference type="NCBI Taxonomy" id="316273"/>
    <lineage>
        <taxon>Bacteria</taxon>
        <taxon>Pseudomonadati</taxon>
        <taxon>Pseudomonadota</taxon>
        <taxon>Gammaproteobacteria</taxon>
        <taxon>Lysobacterales</taxon>
        <taxon>Lysobacteraceae</taxon>
        <taxon>Xanthomonas</taxon>
    </lineage>
</organism>
<feature type="chain" id="PRO_0000298422" description="Disulfide bond formation protein B">
    <location>
        <begin position="1"/>
        <end position="172"/>
    </location>
</feature>
<feature type="topological domain" description="Cytoplasmic" evidence="1">
    <location>
        <begin position="1"/>
        <end position="11"/>
    </location>
</feature>
<feature type="transmembrane region" description="Helical" evidence="1">
    <location>
        <begin position="12"/>
        <end position="28"/>
    </location>
</feature>
<feature type="topological domain" description="Periplasmic" evidence="1">
    <location>
        <begin position="29"/>
        <end position="46"/>
    </location>
</feature>
<feature type="transmembrane region" description="Helical" evidence="1">
    <location>
        <begin position="47"/>
        <end position="63"/>
    </location>
</feature>
<feature type="topological domain" description="Cytoplasmic" evidence="1">
    <location>
        <begin position="64"/>
        <end position="70"/>
    </location>
</feature>
<feature type="transmembrane region" description="Helical" evidence="1">
    <location>
        <begin position="71"/>
        <end position="88"/>
    </location>
</feature>
<feature type="topological domain" description="Periplasmic" evidence="1">
    <location>
        <begin position="89"/>
        <end position="145"/>
    </location>
</feature>
<feature type="transmembrane region" description="Helical" evidence="1">
    <location>
        <begin position="146"/>
        <end position="164"/>
    </location>
</feature>
<feature type="topological domain" description="Cytoplasmic" evidence="1">
    <location>
        <begin position="165"/>
        <end position="172"/>
    </location>
</feature>
<feature type="disulfide bond" description="Redox-active" evidence="1">
    <location>
        <begin position="38"/>
        <end position="41"/>
    </location>
</feature>
<feature type="disulfide bond" description="Redox-active" evidence="1">
    <location>
        <begin position="104"/>
        <end position="131"/>
    </location>
</feature>
<protein>
    <recommendedName>
        <fullName evidence="1">Disulfide bond formation protein B</fullName>
    </recommendedName>
    <alternativeName>
        <fullName evidence="1">Disulfide oxidoreductase</fullName>
    </alternativeName>
</protein>
<accession>Q3BWV6</accession>